<comment type="function">
    <text evidence="1">Suppressor of viral-induced RNA silencing. The potential mechanism of action is based on sequestering siRNAs (By similarity).</text>
</comment>
<comment type="similarity">
    <text evidence="3">Belongs to the carlaviruses nucleic acid-binding protein family.</text>
</comment>
<evidence type="ECO:0000250" key="1"/>
<evidence type="ECO:0000255" key="2"/>
<evidence type="ECO:0000305" key="3"/>
<organism>
    <name type="scientific">Helenium virus S</name>
    <name type="common">HelVS</name>
    <dbReference type="NCBI Taxonomy" id="12171"/>
    <lineage>
        <taxon>Viruses</taxon>
        <taxon>Riboviria</taxon>
        <taxon>Orthornavirae</taxon>
        <taxon>Kitrinoviricota</taxon>
        <taxon>Alsuviricetes</taxon>
        <taxon>Tymovirales</taxon>
        <taxon>Betaflexiviridae</taxon>
        <taxon>Quinvirinae</taxon>
        <taxon>Carlavirus</taxon>
    </lineage>
</organism>
<dbReference type="EMBL" id="D10454">
    <property type="protein sequence ID" value="BAA01249.1"/>
    <property type="molecule type" value="Genomic_RNA"/>
</dbReference>
<dbReference type="RefSeq" id="YP_009505625.1">
    <property type="nucleotide sequence ID" value="NC_038323.1"/>
</dbReference>
<dbReference type="GeneID" id="37616510"/>
<dbReference type="OrthoDB" id="28055at10239"/>
<dbReference type="Proteomes" id="UP000242950">
    <property type="component" value="Genome"/>
</dbReference>
<dbReference type="GO" id="GO:0003677">
    <property type="term" value="F:DNA binding"/>
    <property type="evidence" value="ECO:0007669"/>
    <property type="project" value="UniProtKB-KW"/>
</dbReference>
<dbReference type="GO" id="GO:0008270">
    <property type="term" value="F:zinc ion binding"/>
    <property type="evidence" value="ECO:0007669"/>
    <property type="project" value="UniProtKB-KW"/>
</dbReference>
<dbReference type="GO" id="GO:0006355">
    <property type="term" value="P:regulation of DNA-templated transcription"/>
    <property type="evidence" value="ECO:0007669"/>
    <property type="project" value="InterPro"/>
</dbReference>
<dbReference type="GO" id="GO:0052170">
    <property type="term" value="P:symbiont-mediated suppression of host innate immune response"/>
    <property type="evidence" value="ECO:0007669"/>
    <property type="project" value="UniProtKB-KW"/>
</dbReference>
<dbReference type="InterPro" id="IPR002568">
    <property type="entry name" value="Carla-bd"/>
</dbReference>
<dbReference type="Pfam" id="PF01623">
    <property type="entry name" value="Carla_C4"/>
    <property type="match status" value="1"/>
</dbReference>
<name>VSR_HELVS</name>
<reference key="1">
    <citation type="journal article" date="1990" name="J. Gen. Virol.">
        <title>Nucleotide sequence of the 3'-terminal region of Helenium virus S RNA.</title>
        <authorList>
            <person name="Foster G.D."/>
            <person name="Millar A.W."/>
            <person name="Meehan B.M."/>
            <person name="Mills P.R."/>
        </authorList>
    </citation>
    <scope>NUCLEOTIDE SEQUENCE [GENOMIC RNA]</scope>
</reference>
<feature type="chain" id="PRO_0000222651" description="RNA silencing suppressor">
    <location>
        <begin position="1"/>
        <end position="110"/>
    </location>
</feature>
<feature type="zinc finger region" description="C4-type" evidence="2">
    <location>
        <begin position="60"/>
        <end position="81"/>
    </location>
</feature>
<feature type="region of interest" description="Basic" evidence="1">
    <location>
        <begin position="50"/>
        <end position="53"/>
    </location>
</feature>
<keyword id="KW-0238">DNA-binding</keyword>
<keyword id="KW-0945">Host-virus interaction</keyword>
<keyword id="KW-1090">Inhibition of host innate immune response by virus</keyword>
<keyword id="KW-0479">Metal-binding</keyword>
<keyword id="KW-0941">Suppressor of RNA silencing</keyword>
<keyword id="KW-0899">Viral immunoevasion</keyword>
<keyword id="KW-0862">Zinc</keyword>
<keyword id="KW-0863">Zinc-finger</keyword>
<proteinExistence type="inferred from homology"/>
<accession>Q00572</accession>
<protein>
    <recommendedName>
        <fullName>RNA silencing suppressor</fullName>
    </recommendedName>
    <alternativeName>
        <fullName>12.6 kDa protein</fullName>
    </alternativeName>
    <alternativeName>
        <fullName>Putative nucleic acid-binding protein</fullName>
    </alternativeName>
</protein>
<organismHost>
    <name type="scientific">Helenium amarum</name>
    <dbReference type="NCBI Taxonomy" id="289417"/>
</organismHost>
<organismHost>
    <name type="scientific">Impatiens</name>
    <dbReference type="NCBI Taxonomy" id="35939"/>
</organismHost>
<sequence length="110" mass="12663">MDKRNKANVVLSLCSMFASRGNCIPIPIVFNIYMRAFPKLVGRGTSTYARRRRARSILRCERCYRVYPPLPFSKKCDNRTCVPGISYNIKVADFIKWGVTEVIPHPGFNF</sequence>